<feature type="chain" id="PRO_0000197967" description="Protein ApaG">
    <location>
        <begin position="1"/>
        <end position="126"/>
    </location>
</feature>
<feature type="domain" description="ApaG" evidence="1">
    <location>
        <begin position="2"/>
        <end position="126"/>
    </location>
</feature>
<organism>
    <name type="scientific">Vibrio vulnificus (strain CMCP6)</name>
    <dbReference type="NCBI Taxonomy" id="216895"/>
    <lineage>
        <taxon>Bacteria</taxon>
        <taxon>Pseudomonadati</taxon>
        <taxon>Pseudomonadota</taxon>
        <taxon>Gammaproteobacteria</taxon>
        <taxon>Vibrionales</taxon>
        <taxon>Vibrionaceae</taxon>
        <taxon>Vibrio</taxon>
    </lineage>
</organism>
<dbReference type="EMBL" id="AE016795">
    <property type="protein sequence ID" value="AAO09176.1"/>
    <property type="molecule type" value="Genomic_DNA"/>
</dbReference>
<dbReference type="RefSeq" id="WP_011078743.1">
    <property type="nucleotide sequence ID" value="NC_004459.3"/>
</dbReference>
<dbReference type="SMR" id="Q8DED1"/>
<dbReference type="GeneID" id="93894971"/>
<dbReference type="KEGG" id="vvu:VV1_0664"/>
<dbReference type="HOGENOM" id="CLU_128074_0_0_6"/>
<dbReference type="Proteomes" id="UP000002275">
    <property type="component" value="Chromosome 1"/>
</dbReference>
<dbReference type="GO" id="GO:0070987">
    <property type="term" value="P:error-free translesion synthesis"/>
    <property type="evidence" value="ECO:0007669"/>
    <property type="project" value="TreeGrafter"/>
</dbReference>
<dbReference type="Gene3D" id="2.60.40.1470">
    <property type="entry name" value="ApaG domain"/>
    <property type="match status" value="1"/>
</dbReference>
<dbReference type="HAMAP" id="MF_00791">
    <property type="entry name" value="ApaG"/>
    <property type="match status" value="1"/>
</dbReference>
<dbReference type="InterPro" id="IPR007474">
    <property type="entry name" value="ApaG_domain"/>
</dbReference>
<dbReference type="InterPro" id="IPR036767">
    <property type="entry name" value="ApaG_sf"/>
</dbReference>
<dbReference type="InterPro" id="IPR023065">
    <property type="entry name" value="Uncharacterised_ApaG"/>
</dbReference>
<dbReference type="NCBIfam" id="NF003967">
    <property type="entry name" value="PRK05461.1"/>
    <property type="match status" value="1"/>
</dbReference>
<dbReference type="PANTHER" id="PTHR14289">
    <property type="entry name" value="F-BOX ONLY PROTEIN 3"/>
    <property type="match status" value="1"/>
</dbReference>
<dbReference type="PANTHER" id="PTHR14289:SF16">
    <property type="entry name" value="POLYMERASE DELTA-INTERACTING PROTEIN 2"/>
    <property type="match status" value="1"/>
</dbReference>
<dbReference type="Pfam" id="PF04379">
    <property type="entry name" value="DUF525"/>
    <property type="match status" value="1"/>
</dbReference>
<dbReference type="SUPFAM" id="SSF110069">
    <property type="entry name" value="ApaG-like"/>
    <property type="match status" value="1"/>
</dbReference>
<dbReference type="PROSITE" id="PS51087">
    <property type="entry name" value="APAG"/>
    <property type="match status" value="1"/>
</dbReference>
<evidence type="ECO:0000255" key="1">
    <source>
        <dbReference type="HAMAP-Rule" id="MF_00791"/>
    </source>
</evidence>
<accession>Q8DED1</accession>
<gene>
    <name evidence="1" type="primary">apaG</name>
    <name type="ordered locus">VV1_0664</name>
</gene>
<reference key="1">
    <citation type="submission" date="2002-12" db="EMBL/GenBank/DDBJ databases">
        <title>Complete genome sequence of Vibrio vulnificus CMCP6.</title>
        <authorList>
            <person name="Rhee J.H."/>
            <person name="Kim S.Y."/>
            <person name="Chung S.S."/>
            <person name="Kim J.J."/>
            <person name="Moon Y.H."/>
            <person name="Jeong H."/>
            <person name="Choy H.E."/>
        </authorList>
    </citation>
    <scope>NUCLEOTIDE SEQUENCE [LARGE SCALE GENOMIC DNA]</scope>
    <source>
        <strain>CMCP6</strain>
    </source>
</reference>
<protein>
    <recommendedName>
        <fullName evidence="1">Protein ApaG</fullName>
    </recommendedName>
</protein>
<sequence>MDVSQPRIQIQVHTKYVEEQSNPELARYIFAYIITIKNHSSESVQLLSRRWLITDANGKQISVEGDGVVGQQPFIDAGDEYTYSSGTALDTPVGVMQGQYIMHDAQGKEFVVEIEPFRLAVPNILN</sequence>
<proteinExistence type="inferred from homology"/>
<name>APAG_VIBVU</name>